<reference key="1">
    <citation type="journal article" date="2008" name="J. Biol. Chem.">
        <title>Biochemical and Structural Insights into Bacterial Organelle Form and Biogenesis.</title>
        <authorList>
            <person name="Parsons J.B."/>
            <person name="Dinesh S.D."/>
            <person name="Deery E."/>
            <person name="Leech H.K."/>
            <person name="Brindley A.A."/>
            <person name="Heldt D."/>
            <person name="Frank S."/>
            <person name="Smales C.M."/>
            <person name="Lunsdorf H."/>
            <person name="Rambach A."/>
            <person name="Gass M.H."/>
            <person name="Bleloch A."/>
            <person name="McClean K.J."/>
            <person name="Munro A.W."/>
            <person name="Rigby S.E.J."/>
            <person name="Warren M.J."/>
            <person name="Prentice M.B."/>
        </authorList>
    </citation>
    <scope>NUCLEOTIDE SEQUENCE [GENOMIC DNA]</scope>
    <scope>FUNCTION</scope>
    <scope>PATHWAY</scope>
</reference>
<comment type="function">
    <text evidence="1">L-threonine kinase that catalyzes the conversion of L-threonine to L-threonine-O-3-phosphate. Involved in the de novo synthesis of adenosylcobalamin (coenzyme B12) and the assimilation of cobyric acid.</text>
</comment>
<comment type="function">
    <text evidence="3">Expression of a cosmid containing the full 21-gene pdu operon in E.coli allows E.coli to grow on 1,2-propanediol (1,2-PD) with the appearance of bacterial microcompartments (BMC) in its cytoplasm.</text>
</comment>
<comment type="function">
    <text evidence="1 5">The 1,2-PD-specific bacterial microcompartment (BMC) concentrates low levels of 1,2-PD catabolic enzymes, concentrates volatile reaction intermediates thus enhancing pathway flux and keeps the level of toxic, mutagenic propionaldehyde low (Probable). This gene probably benefits from its induction via the Pdu promoter, rather than a physical interaction with the BMC (By similarity).</text>
</comment>
<comment type="catalytic activity">
    <reaction evidence="1">
        <text>L-threonine + ATP = O-phospho-L-threonine + ADP + H(+)</text>
        <dbReference type="Rhea" id="RHEA:33707"/>
        <dbReference type="ChEBI" id="CHEBI:15378"/>
        <dbReference type="ChEBI" id="CHEBI:30616"/>
        <dbReference type="ChEBI" id="CHEBI:57926"/>
        <dbReference type="ChEBI" id="CHEBI:58675"/>
        <dbReference type="ChEBI" id="CHEBI:456216"/>
        <dbReference type="EC" id="2.7.1.177"/>
    </reaction>
</comment>
<comment type="pathway">
    <text evidence="5">Cofactor biosynthesis; adenosylcobalamin biosynthesis.</text>
</comment>
<comment type="pathway">
    <text evidence="3">Polyol metabolism; 1,2-propanediol degradation.</text>
</comment>
<comment type="subcellular location">
    <subcellularLocation>
        <location evidence="5">Cytoplasm</location>
    </subcellularLocation>
</comment>
<comment type="similarity">
    <text evidence="5">Belongs to the GHMP kinase family. PduX subfamily.</text>
</comment>
<protein>
    <recommendedName>
        <fullName>L-threonine kinase</fullName>
        <ecNumber evidence="1">2.7.1.177</ecNumber>
    </recommendedName>
</protein>
<keyword id="KW-0067">ATP-binding</keyword>
<keyword id="KW-0169">Cobalamin biosynthesis</keyword>
<keyword id="KW-0963">Cytoplasm</keyword>
<keyword id="KW-0418">Kinase</keyword>
<keyword id="KW-0547">Nucleotide-binding</keyword>
<keyword id="KW-0808">Transferase</keyword>
<sequence length="288" mass="31681">MAVAQCPASCGELIQGWILGSEKLVSCPVEWYSTVEVTSGSPLTDERPLSRAMVDRLLQHWQYPAHLSQDIRIDVQSTIPIAKGMASSTADIAATAIAAAHYLGHQLDEPTLAQLCVSLEPTDSTVFRKLTLFDHNNASTQIGCEAQPQLDLLVLESPETLRTADYHRIPRHSGLQAGAAALQRAWEKVQEACISQNPYRLGEAATLSAIASQLLLPKPDFDSLLALVEECDLYGVNVAHSGSVVGLMLDRNRHDVDYIKWMLTQKKLTIHWPEQHLLRMVTGGVELQ</sequence>
<organism>
    <name type="scientific">Citrobacter freundii</name>
    <dbReference type="NCBI Taxonomy" id="546"/>
    <lineage>
        <taxon>Bacteria</taxon>
        <taxon>Pseudomonadati</taxon>
        <taxon>Pseudomonadota</taxon>
        <taxon>Gammaproteobacteria</taxon>
        <taxon>Enterobacterales</taxon>
        <taxon>Enterobacteriaceae</taxon>
        <taxon>Citrobacter</taxon>
        <taxon>Citrobacter freundii complex</taxon>
    </lineage>
</organism>
<name>PDUX_CITFR</name>
<proteinExistence type="inferred from homology"/>
<feature type="chain" id="PRO_0000454286" description="L-threonine kinase">
    <location>
        <begin position="1"/>
        <end position="288"/>
    </location>
</feature>
<feature type="binding site" evidence="2">
    <location>
        <begin position="80"/>
        <end position="90"/>
    </location>
    <ligand>
        <name>ATP</name>
        <dbReference type="ChEBI" id="CHEBI:30616"/>
    </ligand>
</feature>
<evidence type="ECO:0000250" key="1">
    <source>
        <dbReference type="UniProtKB" id="Q9XDM4"/>
    </source>
</evidence>
<evidence type="ECO:0000255" key="2"/>
<evidence type="ECO:0000269" key="3">
    <source>
    </source>
</evidence>
<evidence type="ECO:0000303" key="4">
    <source>
    </source>
</evidence>
<evidence type="ECO:0000305" key="5"/>
<dbReference type="EC" id="2.7.1.177" evidence="1"/>
<dbReference type="EMBL" id="AM498294">
    <property type="protein sequence ID" value="CAM57303.1"/>
    <property type="molecule type" value="Genomic_DNA"/>
</dbReference>
<dbReference type="SMR" id="B1VB82"/>
<dbReference type="UniPathway" id="UPA00148"/>
<dbReference type="UniPathway" id="UPA00621"/>
<dbReference type="GO" id="GO:0005737">
    <property type="term" value="C:cytoplasm"/>
    <property type="evidence" value="ECO:0007669"/>
    <property type="project" value="UniProtKB-SubCell"/>
</dbReference>
<dbReference type="GO" id="GO:0005524">
    <property type="term" value="F:ATP binding"/>
    <property type="evidence" value="ECO:0007669"/>
    <property type="project" value="UniProtKB-KW"/>
</dbReference>
<dbReference type="GO" id="GO:0016301">
    <property type="term" value="F:kinase activity"/>
    <property type="evidence" value="ECO:0007669"/>
    <property type="project" value="UniProtKB-KW"/>
</dbReference>
<dbReference type="GO" id="GO:0009236">
    <property type="term" value="P:cobalamin biosynthetic process"/>
    <property type="evidence" value="ECO:0007669"/>
    <property type="project" value="UniProtKB-UniPathway"/>
</dbReference>
<dbReference type="GO" id="GO:0051144">
    <property type="term" value="P:propanediol catabolic process"/>
    <property type="evidence" value="ECO:0007669"/>
    <property type="project" value="UniProtKB-UniPathway"/>
</dbReference>
<dbReference type="FunFam" id="3.30.230.10:FF:000067">
    <property type="entry name" value="Serine/threonine protein kinase"/>
    <property type="match status" value="1"/>
</dbReference>
<dbReference type="Gene3D" id="3.30.230.10">
    <property type="match status" value="1"/>
</dbReference>
<dbReference type="InterPro" id="IPR006204">
    <property type="entry name" value="GHMP_kinase_N_dom"/>
</dbReference>
<dbReference type="InterPro" id="IPR012363">
    <property type="entry name" value="PduX"/>
</dbReference>
<dbReference type="InterPro" id="IPR020568">
    <property type="entry name" value="Ribosomal_Su5_D2-typ_SF"/>
</dbReference>
<dbReference type="InterPro" id="IPR014721">
    <property type="entry name" value="Ribsml_uS5_D2-typ_fold_subgr"/>
</dbReference>
<dbReference type="PANTHER" id="PTHR43527">
    <property type="entry name" value="4-DIPHOSPHOCYTIDYL-2-C-METHYL-D-ERYTHRITOL KINASE, CHLOROPLASTIC"/>
    <property type="match status" value="1"/>
</dbReference>
<dbReference type="PANTHER" id="PTHR43527:SF1">
    <property type="entry name" value="L-THREONINE KINASE"/>
    <property type="match status" value="1"/>
</dbReference>
<dbReference type="Pfam" id="PF00288">
    <property type="entry name" value="GHMP_kinases_N"/>
    <property type="match status" value="1"/>
</dbReference>
<dbReference type="PIRSF" id="PIRSF033887">
    <property type="entry name" value="PduX"/>
    <property type="match status" value="1"/>
</dbReference>
<dbReference type="SUPFAM" id="SSF54211">
    <property type="entry name" value="Ribosomal protein S5 domain 2-like"/>
    <property type="match status" value="1"/>
</dbReference>
<gene>
    <name evidence="4" type="primary">pduX</name>
</gene>
<accession>B1VB82</accession>